<feature type="chain" id="PRO_0000050767" description="Autophagy-related protein 13">
    <location>
        <begin position="1"/>
        <end position="517"/>
    </location>
</feature>
<feature type="region of interest" description="Important for interaction with ATG101" evidence="13">
    <location>
        <begin position="127"/>
        <end position="134"/>
    </location>
</feature>
<feature type="region of interest" description="Disordered" evidence="1">
    <location>
        <begin position="305"/>
        <end position="324"/>
    </location>
</feature>
<feature type="region of interest" description="Disordered" evidence="1">
    <location>
        <begin position="332"/>
        <end position="361"/>
    </location>
</feature>
<feature type="region of interest" description="Disordered" evidence="1">
    <location>
        <begin position="405"/>
        <end position="439"/>
    </location>
</feature>
<feature type="short sequence motif" description="LIR" evidence="20">
    <location>
        <begin position="444"/>
        <end position="447"/>
    </location>
</feature>
<feature type="compositionally biased region" description="Polar residues" evidence="1">
    <location>
        <begin position="342"/>
        <end position="358"/>
    </location>
</feature>
<feature type="modified residue" description="N-acetylmethionine" evidence="21 22">
    <location>
        <position position="1"/>
    </location>
</feature>
<feature type="modified residue" description="Phosphoserine; by ULK1" evidence="9 23 24">
    <location>
        <position position="355"/>
    </location>
</feature>
<feature type="modified residue" description="Phosphoserine" evidence="24">
    <location>
        <position position="356"/>
    </location>
</feature>
<feature type="modified residue" description="Phosphoserine" evidence="23">
    <location>
        <position position="361"/>
    </location>
</feature>
<feature type="splice variant" id="VSP_044503" description="In isoform 4." evidence="16">
    <location>
        <begin position="1"/>
        <end position="79"/>
    </location>
</feature>
<feature type="splice variant" id="VSP_044640" description="In isoform 5." evidence="18">
    <original>S</original>
    <variation>SQCVFTVTKAHFQTPTPVVTDTLRVPMAGLAFSH</variation>
    <location>
        <position position="262"/>
    </location>
</feature>
<feature type="splice variant" id="VSP_044504" description="In isoform 4." evidence="16">
    <location>
        <begin position="263"/>
        <end position="299"/>
    </location>
</feature>
<feature type="splice variant" id="VSP_002431" description="In isoform 2 and isoform 3." evidence="16 17">
    <location>
        <begin position="265"/>
        <end position="301"/>
    </location>
</feature>
<feature type="splice variant" id="VSP_002432" description="In isoform 3." evidence="17">
    <original>HSDGSSGGSSGNTHD</original>
    <variation>PCSWPLPCLLSPSTV</variation>
    <location>
        <begin position="428"/>
        <end position="442"/>
    </location>
</feature>
<feature type="splice variant" id="VSP_002433" description="In isoform 3." evidence="17">
    <location>
        <begin position="443"/>
        <end position="517"/>
    </location>
</feature>
<feature type="mutagenesis site" description="Abolishes interaction with ATG101; when associated with D-133." evidence="13">
    <original>S</original>
    <variation>H</variation>
    <location>
        <position position="127"/>
    </location>
</feature>
<feature type="mutagenesis site" description="Decreases interaction with ATG101; when associated with D-134." evidence="13">
    <original>I</original>
    <variation>D</variation>
    <location>
        <position position="131"/>
    </location>
</feature>
<feature type="mutagenesis site" description="Abolishes interaction with ATG101; when associated with H-127." evidence="13">
    <original>R</original>
    <variation>D</variation>
    <location>
        <position position="133"/>
    </location>
</feature>
<feature type="mutagenesis site" description="Decreases interaction with ATG101; when associated with D-131." evidence="13">
    <original>V</original>
    <variation>D</variation>
    <location>
        <position position="134"/>
    </location>
</feature>
<feature type="mutagenesis site" description="Decreases interaction with MAP1LC3A." evidence="12">
    <original>F</original>
    <variation>A</variation>
    <location>
        <position position="444"/>
    </location>
</feature>
<feature type="mutagenesis site" description="Decreases interaction with MAP1LC3A." evidence="12">
    <original>I</original>
    <variation>A</variation>
    <location>
        <position position="447"/>
    </location>
</feature>
<feature type="helix" evidence="25">
    <location>
        <begin position="12"/>
        <end position="30"/>
    </location>
</feature>
<feature type="strand" evidence="25">
    <location>
        <begin position="33"/>
        <end position="35"/>
    </location>
</feature>
<feature type="strand" evidence="25">
    <location>
        <begin position="42"/>
        <end position="44"/>
    </location>
</feature>
<feature type="helix" evidence="26">
    <location>
        <begin position="50"/>
        <end position="52"/>
    </location>
</feature>
<feature type="helix" evidence="25">
    <location>
        <begin position="59"/>
        <end position="69"/>
    </location>
</feature>
<feature type="strand" evidence="25">
    <location>
        <begin position="78"/>
        <end position="88"/>
    </location>
</feature>
<feature type="strand" evidence="25">
    <location>
        <begin position="93"/>
        <end position="103"/>
    </location>
</feature>
<feature type="strand" evidence="27">
    <location>
        <begin position="109"/>
        <end position="111"/>
    </location>
</feature>
<feature type="helix" evidence="25">
    <location>
        <begin position="114"/>
        <end position="131"/>
    </location>
</feature>
<feature type="turn" evidence="25">
    <location>
        <begin position="132"/>
        <end position="134"/>
    </location>
</feature>
<feature type="helix" evidence="25">
    <location>
        <begin position="137"/>
        <end position="142"/>
    </location>
</feature>
<feature type="strand" evidence="25">
    <location>
        <begin position="145"/>
        <end position="158"/>
    </location>
</feature>
<feature type="helix" evidence="28">
    <location>
        <begin position="162"/>
        <end position="164"/>
    </location>
</feature>
<feature type="strand" evidence="25">
    <location>
        <begin position="169"/>
        <end position="178"/>
    </location>
</feature>
<feature type="strand" evidence="25">
    <location>
        <begin position="181"/>
        <end position="189"/>
    </location>
</feature>
<feature type="turn" evidence="29">
    <location>
        <begin position="452"/>
        <end position="454"/>
    </location>
</feature>
<protein>
    <recommendedName>
        <fullName>Autophagy-related protein 13</fullName>
    </recommendedName>
</protein>
<name>ATG13_HUMAN</name>
<proteinExistence type="evidence at protein level"/>
<accession>O75143</accession>
<accession>B4DFI4</accession>
<accession>D3DQQ1</accession>
<accession>D3DQQ2</accession>
<accession>E9PQZ8</accession>
<accession>Q53EN6</accession>
<accession>Q9BRL3</accession>
<accession>Q9H8B0</accession>
<organism>
    <name type="scientific">Homo sapiens</name>
    <name type="common">Human</name>
    <dbReference type="NCBI Taxonomy" id="9606"/>
    <lineage>
        <taxon>Eukaryota</taxon>
        <taxon>Metazoa</taxon>
        <taxon>Chordata</taxon>
        <taxon>Craniata</taxon>
        <taxon>Vertebrata</taxon>
        <taxon>Euteleostomi</taxon>
        <taxon>Mammalia</taxon>
        <taxon>Eutheria</taxon>
        <taxon>Euarchontoglires</taxon>
        <taxon>Primates</taxon>
        <taxon>Haplorrhini</taxon>
        <taxon>Catarrhini</taxon>
        <taxon>Hominidae</taxon>
        <taxon>Homo</taxon>
    </lineage>
</organism>
<keyword id="KW-0002">3D-structure</keyword>
<keyword id="KW-0007">Acetylation</keyword>
<keyword id="KW-0025">Alternative splicing</keyword>
<keyword id="KW-0072">Autophagy</keyword>
<keyword id="KW-0963">Cytoplasm</keyword>
<keyword id="KW-0597">Phosphoprotein</keyword>
<keyword id="KW-1267">Proteomics identification</keyword>
<keyword id="KW-1185">Reference proteome</keyword>
<reference key="1">
    <citation type="journal article" date="1998" name="DNA Res.">
        <title>Prediction of the coding sequences of unidentified human genes. X. The complete sequences of 100 new cDNA clones from brain which can code for large proteins in vitro.</title>
        <authorList>
            <person name="Ishikawa K."/>
            <person name="Nagase T."/>
            <person name="Suyama M."/>
            <person name="Miyajima N."/>
            <person name="Tanaka A."/>
            <person name="Kotani H."/>
            <person name="Nomura N."/>
            <person name="Ohara O."/>
        </authorList>
    </citation>
    <scope>NUCLEOTIDE SEQUENCE [LARGE SCALE MRNA] (ISOFORM 1)</scope>
    <source>
        <tissue>Brain</tissue>
    </source>
</reference>
<reference key="2">
    <citation type="journal article" date="2004" name="Nat. Genet.">
        <title>Complete sequencing and characterization of 21,243 full-length human cDNAs.</title>
        <authorList>
            <person name="Ota T."/>
            <person name="Suzuki Y."/>
            <person name="Nishikawa T."/>
            <person name="Otsuki T."/>
            <person name="Sugiyama T."/>
            <person name="Irie R."/>
            <person name="Wakamatsu A."/>
            <person name="Hayashi K."/>
            <person name="Sato H."/>
            <person name="Nagai K."/>
            <person name="Kimura K."/>
            <person name="Makita H."/>
            <person name="Sekine M."/>
            <person name="Obayashi M."/>
            <person name="Nishi T."/>
            <person name="Shibahara T."/>
            <person name="Tanaka T."/>
            <person name="Ishii S."/>
            <person name="Yamamoto J."/>
            <person name="Saito K."/>
            <person name="Kawai Y."/>
            <person name="Isono Y."/>
            <person name="Nakamura Y."/>
            <person name="Nagahari K."/>
            <person name="Murakami K."/>
            <person name="Yasuda T."/>
            <person name="Iwayanagi T."/>
            <person name="Wagatsuma M."/>
            <person name="Shiratori A."/>
            <person name="Sudo H."/>
            <person name="Hosoiri T."/>
            <person name="Kaku Y."/>
            <person name="Kodaira H."/>
            <person name="Kondo H."/>
            <person name="Sugawara M."/>
            <person name="Takahashi M."/>
            <person name="Kanda K."/>
            <person name="Yokoi T."/>
            <person name="Furuya T."/>
            <person name="Kikkawa E."/>
            <person name="Omura Y."/>
            <person name="Abe K."/>
            <person name="Kamihara K."/>
            <person name="Katsuta N."/>
            <person name="Sato K."/>
            <person name="Tanikawa M."/>
            <person name="Yamazaki M."/>
            <person name="Ninomiya K."/>
            <person name="Ishibashi T."/>
            <person name="Yamashita H."/>
            <person name="Murakawa K."/>
            <person name="Fujimori K."/>
            <person name="Tanai H."/>
            <person name="Kimata M."/>
            <person name="Watanabe M."/>
            <person name="Hiraoka S."/>
            <person name="Chiba Y."/>
            <person name="Ishida S."/>
            <person name="Ono Y."/>
            <person name="Takiguchi S."/>
            <person name="Watanabe S."/>
            <person name="Yosida M."/>
            <person name="Hotuta T."/>
            <person name="Kusano J."/>
            <person name="Kanehori K."/>
            <person name="Takahashi-Fujii A."/>
            <person name="Hara H."/>
            <person name="Tanase T.-O."/>
            <person name="Nomura Y."/>
            <person name="Togiya S."/>
            <person name="Komai F."/>
            <person name="Hara R."/>
            <person name="Takeuchi K."/>
            <person name="Arita M."/>
            <person name="Imose N."/>
            <person name="Musashino K."/>
            <person name="Yuuki H."/>
            <person name="Oshima A."/>
            <person name="Sasaki N."/>
            <person name="Aotsuka S."/>
            <person name="Yoshikawa Y."/>
            <person name="Matsunawa H."/>
            <person name="Ichihara T."/>
            <person name="Shiohata N."/>
            <person name="Sano S."/>
            <person name="Moriya S."/>
            <person name="Momiyama H."/>
            <person name="Satoh N."/>
            <person name="Takami S."/>
            <person name="Terashima Y."/>
            <person name="Suzuki O."/>
            <person name="Nakagawa S."/>
            <person name="Senoh A."/>
            <person name="Mizoguchi H."/>
            <person name="Goto Y."/>
            <person name="Shimizu F."/>
            <person name="Wakebe H."/>
            <person name="Hishigaki H."/>
            <person name="Watanabe T."/>
            <person name="Sugiyama A."/>
            <person name="Takemoto M."/>
            <person name="Kawakami B."/>
            <person name="Yamazaki M."/>
            <person name="Watanabe K."/>
            <person name="Kumagai A."/>
            <person name="Itakura S."/>
            <person name="Fukuzumi Y."/>
            <person name="Fujimori Y."/>
            <person name="Komiyama M."/>
            <person name="Tashiro H."/>
            <person name="Tanigami A."/>
            <person name="Fujiwara T."/>
            <person name="Ono T."/>
            <person name="Yamada K."/>
            <person name="Fujii Y."/>
            <person name="Ozaki K."/>
            <person name="Hirao M."/>
            <person name="Ohmori Y."/>
            <person name="Kawabata A."/>
            <person name="Hikiji T."/>
            <person name="Kobatake N."/>
            <person name="Inagaki H."/>
            <person name="Ikema Y."/>
            <person name="Okamoto S."/>
            <person name="Okitani R."/>
            <person name="Kawakami T."/>
            <person name="Noguchi S."/>
            <person name="Itoh T."/>
            <person name="Shigeta K."/>
            <person name="Senba T."/>
            <person name="Matsumura K."/>
            <person name="Nakajima Y."/>
            <person name="Mizuno T."/>
            <person name="Morinaga M."/>
            <person name="Sasaki M."/>
            <person name="Togashi T."/>
            <person name="Oyama M."/>
            <person name="Hata H."/>
            <person name="Watanabe M."/>
            <person name="Komatsu T."/>
            <person name="Mizushima-Sugano J."/>
            <person name="Satoh T."/>
            <person name="Shirai Y."/>
            <person name="Takahashi Y."/>
            <person name="Nakagawa K."/>
            <person name="Okumura K."/>
            <person name="Nagase T."/>
            <person name="Nomura N."/>
            <person name="Kikuchi H."/>
            <person name="Masuho Y."/>
            <person name="Yamashita R."/>
            <person name="Nakai K."/>
            <person name="Yada T."/>
            <person name="Nakamura Y."/>
            <person name="Ohara O."/>
            <person name="Isogai T."/>
            <person name="Sugano S."/>
        </authorList>
    </citation>
    <scope>NUCLEOTIDE SEQUENCE [LARGE SCALE MRNA] (ISOFORMS 2 AND 4)</scope>
    <source>
        <tissue>Brain cortex</tissue>
        <tissue>Thyroid</tissue>
    </source>
</reference>
<reference key="3">
    <citation type="submission" date="2005-04" db="EMBL/GenBank/DDBJ databases">
        <authorList>
            <person name="Totoki Y."/>
            <person name="Toyoda A."/>
            <person name="Takeda T."/>
            <person name="Sakaki Y."/>
            <person name="Tanaka A."/>
            <person name="Yokoyama S."/>
        </authorList>
    </citation>
    <scope>NUCLEOTIDE SEQUENCE [LARGE SCALE MRNA] (ISOFORM 5)</scope>
    <source>
        <tissue>Brain</tissue>
    </source>
</reference>
<reference key="4">
    <citation type="journal article" date="2006" name="Nature">
        <title>Human chromosome 11 DNA sequence and analysis including novel gene identification.</title>
        <authorList>
            <person name="Taylor T.D."/>
            <person name="Noguchi H."/>
            <person name="Totoki Y."/>
            <person name="Toyoda A."/>
            <person name="Kuroki Y."/>
            <person name="Dewar K."/>
            <person name="Lloyd C."/>
            <person name="Itoh T."/>
            <person name="Takeda T."/>
            <person name="Kim D.-W."/>
            <person name="She X."/>
            <person name="Barlow K.F."/>
            <person name="Bloom T."/>
            <person name="Bruford E."/>
            <person name="Chang J.L."/>
            <person name="Cuomo C.A."/>
            <person name="Eichler E."/>
            <person name="FitzGerald M.G."/>
            <person name="Jaffe D.B."/>
            <person name="LaButti K."/>
            <person name="Nicol R."/>
            <person name="Park H.-S."/>
            <person name="Seaman C."/>
            <person name="Sougnez C."/>
            <person name="Yang X."/>
            <person name="Zimmer A.R."/>
            <person name="Zody M.C."/>
            <person name="Birren B.W."/>
            <person name="Nusbaum C."/>
            <person name="Fujiyama A."/>
            <person name="Hattori M."/>
            <person name="Rogers J."/>
            <person name="Lander E.S."/>
            <person name="Sakaki Y."/>
        </authorList>
    </citation>
    <scope>NUCLEOTIDE SEQUENCE [LARGE SCALE GENOMIC DNA]</scope>
</reference>
<reference key="5">
    <citation type="submission" date="2005-09" db="EMBL/GenBank/DDBJ databases">
        <authorList>
            <person name="Mural R.J."/>
            <person name="Istrail S."/>
            <person name="Sutton G.G."/>
            <person name="Florea L."/>
            <person name="Halpern A.L."/>
            <person name="Mobarry C.M."/>
            <person name="Lippert R."/>
            <person name="Walenz B."/>
            <person name="Shatkay H."/>
            <person name="Dew I."/>
            <person name="Miller J.R."/>
            <person name="Flanigan M.J."/>
            <person name="Edwards N.J."/>
            <person name="Bolanos R."/>
            <person name="Fasulo D."/>
            <person name="Halldorsson B.V."/>
            <person name="Hannenhalli S."/>
            <person name="Turner R."/>
            <person name="Yooseph S."/>
            <person name="Lu F."/>
            <person name="Nusskern D.R."/>
            <person name="Shue B.C."/>
            <person name="Zheng X.H."/>
            <person name="Zhong F."/>
            <person name="Delcher A.L."/>
            <person name="Huson D.H."/>
            <person name="Kravitz S.A."/>
            <person name="Mouchard L."/>
            <person name="Reinert K."/>
            <person name="Remington K.A."/>
            <person name="Clark A.G."/>
            <person name="Waterman M.S."/>
            <person name="Eichler E.E."/>
            <person name="Adams M.D."/>
            <person name="Hunkapiller M.W."/>
            <person name="Myers E.W."/>
            <person name="Venter J.C."/>
        </authorList>
    </citation>
    <scope>NUCLEOTIDE SEQUENCE [LARGE SCALE GENOMIC DNA]</scope>
</reference>
<reference key="6">
    <citation type="journal article" date="2004" name="Genome Res.">
        <title>The status, quality, and expansion of the NIH full-length cDNA project: the Mammalian Gene Collection (MGC).</title>
        <authorList>
            <consortium name="The MGC Project Team"/>
        </authorList>
    </citation>
    <scope>NUCLEOTIDE SEQUENCE [LARGE SCALE MRNA] (ISOFORMS 2 AND 3)</scope>
    <source>
        <tissue>Cervix</tissue>
        <tissue>Lung</tissue>
        <tissue>Muscle</tissue>
    </source>
</reference>
<reference key="7">
    <citation type="journal article" date="2009" name="Anal. Chem.">
        <title>Lys-N and trypsin cover complementary parts of the phosphoproteome in a refined SCX-based approach.</title>
        <authorList>
            <person name="Gauci S."/>
            <person name="Helbig A.O."/>
            <person name="Slijper M."/>
            <person name="Krijgsveld J."/>
            <person name="Heck A.J."/>
            <person name="Mohammed S."/>
        </authorList>
    </citation>
    <scope>ACETYLATION [LARGE SCALE ANALYSIS] AT MET-1</scope>
    <scope>IDENTIFICATION BY MASS SPECTROMETRY [LARGE SCALE ANALYSIS]</scope>
</reference>
<reference key="8">
    <citation type="journal article" date="2009" name="Autophagy">
        <title>Atg101, a novel mammalian autophagy protein interacting with Atg13.</title>
        <authorList>
            <person name="Hosokawa N."/>
            <person name="Sasaki T."/>
            <person name="Iemura S.I."/>
            <person name="Natsume T."/>
            <person name="Hara T."/>
            <person name="Mizushima N."/>
        </authorList>
    </citation>
    <scope>INTERACTION WITH ATG101; ULK1 AND RB1CC1</scope>
    <scope>SUBUNIT</scope>
</reference>
<reference key="9">
    <citation type="journal article" date="2009" name="Autophagy">
        <title>A novel, human Atg13 binding protein, Atg101, interacts with ULK1 and is essential for macroautophagy.</title>
        <authorList>
            <person name="Mercer C.A."/>
            <person name="Kaliappan A."/>
            <person name="Dennis P.B."/>
        </authorList>
    </citation>
    <scope>FUNCTION AS AUTOPHAGY FACTOR</scope>
    <scope>PHOSPHORYLATION</scope>
    <scope>INTERACTION WITH ULK1 AND ATG101</scope>
</reference>
<reference key="10">
    <citation type="journal article" date="2009" name="Mol. Biol. Cell">
        <title>Nutrient-dependent mTORC1 association with the ULK1-Atg13-FIP200 complex required for autophagy.</title>
        <authorList>
            <person name="Hosokawa N."/>
            <person name="Hara T."/>
            <person name="Kaizuka T."/>
            <person name="Kishi C."/>
            <person name="Takamura A."/>
            <person name="Miura Y."/>
            <person name="Iemura S."/>
            <person name="Natsume T."/>
            <person name="Takehana K."/>
            <person name="Yamada N."/>
            <person name="Guan J.L."/>
            <person name="Oshiro N."/>
            <person name="Mizushima N."/>
        </authorList>
    </citation>
    <scope>FUNCTION</scope>
    <scope>INTERACTION WITH ULK1 AND RB1CC1</scope>
    <scope>PHOSPHORYLATION</scope>
    <scope>SUBCELLULAR LOCATION</scope>
</reference>
<reference key="11">
    <citation type="journal article" date="2009" name="Mol. Biol. Cell">
        <title>ULK-Atg13-FIP200 complexes mediate mTOR signaling to the autophagy machinery.</title>
        <authorList>
            <person name="Jung C.H."/>
            <person name="Jun C.B."/>
            <person name="Ro S.H."/>
            <person name="Kim Y.M."/>
            <person name="Otto N.M."/>
            <person name="Cao J."/>
            <person name="Kundu M."/>
            <person name="Kim D.H."/>
        </authorList>
    </citation>
    <scope>INTERACTION WITH ULK1; ULK2 AND RB1CC1</scope>
    <scope>PHOSPHORYLATION BY ULK1; ULK2 AND MTOR</scope>
    <scope>FUNCTION</scope>
</reference>
<reference key="12">
    <citation type="journal article" date="2011" name="Mol. Cell">
        <title>Hsp90-Cdc37 chaperone complex regulates Ulk1- and Atg13-mediated mitophagy.</title>
        <authorList>
            <person name="Joo J.H."/>
            <person name="Dorsey F.C."/>
            <person name="Joshi A."/>
            <person name="Hennessy-Walters K.M."/>
            <person name="Rose K.L."/>
            <person name="McCastlain K."/>
            <person name="Zhang J."/>
            <person name="Iyengar R."/>
            <person name="Jung C.H."/>
            <person name="Suen D.F."/>
            <person name="Steeves M.A."/>
            <person name="Yang C.Y."/>
            <person name="Prater S.M."/>
            <person name="Kim D.H."/>
            <person name="Thompson C.B."/>
            <person name="Youle R.J."/>
            <person name="Ney P.A."/>
            <person name="Cleveland J.L."/>
            <person name="Kundu M."/>
        </authorList>
    </citation>
    <scope>FUNCTION</scope>
    <scope>INTERACTION WITH ULK1</scope>
    <scope>PHOSPHORYLATION AT SER-355 BY ULK1</scope>
</reference>
<reference key="13">
    <citation type="journal article" date="2009" name="Mol. Cell. Biol.">
        <title>Kinase-inactivated ULK proteins inhibit autophagy via their conserved C-terminal domains using an Atg13-independent mechanism.</title>
        <authorList>
            <person name="Chan E.Y.W."/>
            <person name="Longatti A."/>
            <person name="McKnight N.C."/>
            <person name="Tooze S.A."/>
        </authorList>
    </citation>
    <scope>FUNCTION AS AUTOPHAGY FACTOR</scope>
    <scope>INTERACTION WITH ULK1 AND ULK2</scope>
    <scope>PHOSPHORYLATION BY ULK1 AND ULK2</scope>
</reference>
<reference key="14">
    <citation type="journal article" date="2011" name="Autophagy">
        <title>ULK1 inhibits the kinase activity of mTORC1 and cell proliferation.</title>
        <authorList>
            <person name="Jung C.H."/>
            <person name="Seo M."/>
            <person name="Otto N.M."/>
            <person name="Kim D.H."/>
        </authorList>
    </citation>
    <scope>FUNCTION</scope>
</reference>
<reference key="15">
    <citation type="journal article" date="2011" name="Nat. Cell Biol.">
        <title>AMPK and mTOR regulate autophagy through direct phosphorylation of Ulk1.</title>
        <authorList>
            <person name="Kim J."/>
            <person name="Kundu M."/>
            <person name="Viollet B."/>
            <person name="Guan K.L."/>
        </authorList>
    </citation>
    <scope>PHOSPHORYLATION</scope>
    <scope>INTERACTION WITH ULK1 AND RB1CC1</scope>
</reference>
<reference key="16">
    <citation type="journal article" date="2012" name="J. Biochem.">
        <title>TGFbeta-activated kinase 1 (TAK1)-binding proteins (TAB) 2 and 3 negatively regulate autophagy.</title>
        <authorList>
            <person name="Takaesu G."/>
            <person name="Kobayashi T."/>
            <person name="Yoshimura A."/>
        </authorList>
    </citation>
    <scope>INTERACTION WITH TAB2 AND TAB3</scope>
</reference>
<reference key="17">
    <citation type="journal article" date="2012" name="J. Biol. Chem.">
        <title>ATG8 family proteins act as scaffolds for assembly of the ULK complex: sequence requirements for LC3-interacting region (LIR) motifs.</title>
        <authorList>
            <person name="Alemu E.A."/>
            <person name="Lamark T."/>
            <person name="Torgersen K.M."/>
            <person name="Birgisdottir A.B."/>
            <person name="Larsen K.B."/>
            <person name="Jain A."/>
            <person name="Olsvik H."/>
            <person name="Overvatn A."/>
            <person name="Kirkin V."/>
            <person name="Johansen T."/>
        </authorList>
    </citation>
    <scope>INTERACTION WITH GABARAP; GABARAPL1; GABARAPL2 AND MAP1LC3A</scope>
    <scope>DOMAIN</scope>
    <scope>MUTAGENESIS</scope>
</reference>
<reference key="18">
    <citation type="journal article" date="2012" name="Proc. Natl. Acad. Sci. U.S.A.">
        <title>N-terminal acetylome analyses and functional insights of the N-terminal acetyltransferase NatB.</title>
        <authorList>
            <person name="Van Damme P."/>
            <person name="Lasa M."/>
            <person name="Polevoda B."/>
            <person name="Gazquez C."/>
            <person name="Elosegui-Artola A."/>
            <person name="Kim D.S."/>
            <person name="De Juan-Pardo E."/>
            <person name="Demeyer K."/>
            <person name="Hole K."/>
            <person name="Larrea E."/>
            <person name="Timmerman E."/>
            <person name="Prieto J."/>
            <person name="Arnesen T."/>
            <person name="Sherman F."/>
            <person name="Gevaert K."/>
            <person name="Aldabe R."/>
        </authorList>
    </citation>
    <scope>ACETYLATION [LARGE SCALE ANALYSIS] AT MET-1</scope>
    <scope>IDENTIFICATION BY MASS SPECTROMETRY [LARGE SCALE ANALYSIS]</scope>
</reference>
<reference key="19">
    <citation type="journal article" date="2013" name="J. Proteome Res.">
        <title>Toward a comprehensive characterization of a human cancer cell phosphoproteome.</title>
        <authorList>
            <person name="Zhou H."/>
            <person name="Di Palma S."/>
            <person name="Preisinger C."/>
            <person name="Peng M."/>
            <person name="Polat A.N."/>
            <person name="Heck A.J."/>
            <person name="Mohammed S."/>
        </authorList>
    </citation>
    <scope>PHOSPHORYLATION [LARGE SCALE ANALYSIS] AT SER-355 AND SER-361</scope>
    <scope>IDENTIFICATION BY MASS SPECTROMETRY [LARGE SCALE ANALYSIS]</scope>
    <source>
        <tissue>Cervix carcinoma</tissue>
        <tissue>Erythroleukemia</tissue>
    </source>
</reference>
<reference key="20">
    <citation type="journal article" date="2014" name="J. Proteomics">
        <title>An enzyme assisted RP-RPLC approach for in-depth analysis of human liver phosphoproteome.</title>
        <authorList>
            <person name="Bian Y."/>
            <person name="Song C."/>
            <person name="Cheng K."/>
            <person name="Dong M."/>
            <person name="Wang F."/>
            <person name="Huang J."/>
            <person name="Sun D."/>
            <person name="Wang L."/>
            <person name="Ye M."/>
            <person name="Zou H."/>
        </authorList>
    </citation>
    <scope>PHOSPHORYLATION [LARGE SCALE ANALYSIS] AT SER-355 AND SER-356</scope>
    <scope>IDENTIFICATION BY MASS SPECTROMETRY [LARGE SCALE ANALYSIS]</scope>
    <source>
        <tissue>Liver</tissue>
    </source>
</reference>
<reference key="21">
    <citation type="journal article" date="2016" name="EMBO J.">
        <title>The C9orf72 protein interacts with Rab1a and the ULK1 complex to regulate initiation of autophagy.</title>
        <authorList>
            <person name="Webster C.P."/>
            <person name="Smith E.F."/>
            <person name="Bauer C.S."/>
            <person name="Moller A."/>
            <person name="Hautbergue G.M."/>
            <person name="Ferraiuolo L."/>
            <person name="Myszczynska M.A."/>
            <person name="Higginbottom A."/>
            <person name="Walsh M.J."/>
            <person name="Whitworth A.J."/>
            <person name="Kaspar B.K."/>
            <person name="Meyer K."/>
            <person name="Shaw P.J."/>
            <person name="Grierson A.J."/>
            <person name="De Vos K.J."/>
        </authorList>
    </citation>
    <scope>INTERACTION WITH C9ORF72</scope>
</reference>
<reference key="22">
    <citation type="journal article" date="2019" name="Mol. Cell">
        <title>The ER-Localized Transmembrane Protein TMEM39A/SUSR2 Regulates Autophagy by Controlling the Trafficking of the PtdIns(4)P Phosphatase SAC1.</title>
        <authorList>
            <person name="Miao G."/>
            <person name="Zhang Y."/>
            <person name="Chen D."/>
            <person name="Zhang H."/>
        </authorList>
    </citation>
    <scope>INTERACTION WITH ULK1 AND RB1CC1</scope>
</reference>
<reference key="23">
    <citation type="journal article" date="2014" name="Structure">
        <title>Structural basis of the autophagy-related LC3/Atg13 LIR complex: recognition and interaction mechanism.</title>
        <authorList>
            <person name="Suzuki H."/>
            <person name="Tabata K."/>
            <person name="Morita E."/>
            <person name="Kawasaki M."/>
            <person name="Kato R."/>
            <person name="Dobson R.C."/>
            <person name="Yoshimori T."/>
            <person name="Wakatsuki S."/>
        </authorList>
    </citation>
    <scope>X-RAY CRYSTALLOGRAPHY (1.77 ANGSTROMS) OF 436-447</scope>
    <scope>INTERACTION WITH MAP1LC3A; MAP1LC3B AND MAP1LC3C</scope>
    <scope>MOTIF</scope>
    <scope>SUBUNIT</scope>
    <scope>MUTAGENESIS OF PHE-444 AND ILE-447</scope>
</reference>
<reference key="24">
    <citation type="journal article" date="2015" name="Autophagy">
        <title>The mammalian autophagy initiator complex contains 2 HORMA domain proteins.</title>
        <authorList>
            <person name="Michel M."/>
            <person name="Schwarten M."/>
            <person name="Decker C."/>
            <person name="Nagel-Steger L."/>
            <person name="Willbold D."/>
            <person name="Weiergraber O.H."/>
        </authorList>
    </citation>
    <scope>X-RAY CRYSTALLOGRAPHY (1.90 ANGSTROMS)</scope>
</reference>
<reference key="25">
    <citation type="journal article" date="2015" name="Structure">
        <title>Structure of the human Atg13-Atg101 HORMA heterodimer: an interaction hub within the ULK1 complex.</title>
        <authorList>
            <person name="Qi S."/>
            <person name="Kim do J."/>
            <person name="Stjepanovic G."/>
            <person name="Hurley J.H."/>
        </authorList>
    </citation>
    <scope>X-RAY CRYSTALLOGRAPHY (1.63 ANGSTROMS) OF 1-198 IN COMPLEX WITH ATG101</scope>
    <scope>INTERACTION WITH ATG101</scope>
    <scope>MUTAGENESIS OF SER-127; ILE-131; ARG-133 AND VAL-134</scope>
</reference>
<sequence>METDLNSQDRKDLDKFIKFFALKTVQVIVQARLGEKICTRSSSSPTGSDWFNLAIKDIPEVTHEAKKALAGQLPAVGRSMCVEISLKTSEGDSMELEIWCLEMNEKCDKEIKVSYTVYNRLSLLLKSLLAITRVTPAYRLSRKQGHEYVILYRIYFGEVQLSGLGEGFQTVRVGTVGTPVGTITLSCAYRINLAFMSTRQFERTPPIMGIIIDHFVDRPYPSSSPMHPCNYRTAGEDTGVIYPSVEDSQEVCTTSFSTSPPSQLSSSRLSYQPAALGVGSADLAYPVVFAAGLNATHPHQLMVPGKEGGVPLAPNQPVHGTQADQERLATCTPSDRTHCAATPSSSEDTETVSNSSEGRASPHDVLETIFVRKVGAFVNKPINQVTLTSLDIPFAMFAPKNLELEDTDPMVNPPDSPETESPLQGSLHSDGSSGGSSGNTHDDFVMIDFKPAFSKDDILPMDLGTFYREFQNPPQLSSLSIDIGAQSMAEDLDSLPEKLAVHEKNVREFDAFVETLQ</sequence>
<gene>
    <name type="primary">ATG13</name>
    <name type="synonym">KIAA0652</name>
</gene>
<dbReference type="EMBL" id="AB014552">
    <property type="protein sequence ID" value="BAA31627.2"/>
    <property type="status" value="ALT_INIT"/>
    <property type="molecule type" value="mRNA"/>
</dbReference>
<dbReference type="EMBL" id="AK023867">
    <property type="protein sequence ID" value="BAB14707.1"/>
    <property type="molecule type" value="mRNA"/>
</dbReference>
<dbReference type="EMBL" id="AK294110">
    <property type="protein sequence ID" value="BAG57445.1"/>
    <property type="molecule type" value="mRNA"/>
</dbReference>
<dbReference type="EMBL" id="AK223603">
    <property type="protein sequence ID" value="BAD97323.1"/>
    <property type="status" value="ALT_INIT"/>
    <property type="molecule type" value="mRNA"/>
</dbReference>
<dbReference type="EMBL" id="AC115088">
    <property type="status" value="NOT_ANNOTATED_CDS"/>
    <property type="molecule type" value="Genomic_DNA"/>
</dbReference>
<dbReference type="EMBL" id="AC127035">
    <property type="status" value="NOT_ANNOTATED_CDS"/>
    <property type="molecule type" value="Genomic_DNA"/>
</dbReference>
<dbReference type="EMBL" id="CH471064">
    <property type="protein sequence ID" value="EAW67985.1"/>
    <property type="molecule type" value="Genomic_DNA"/>
</dbReference>
<dbReference type="EMBL" id="CH471064">
    <property type="protein sequence ID" value="EAW67986.1"/>
    <property type="molecule type" value="Genomic_DNA"/>
</dbReference>
<dbReference type="EMBL" id="CH471064">
    <property type="protein sequence ID" value="EAW67987.1"/>
    <property type="molecule type" value="Genomic_DNA"/>
</dbReference>
<dbReference type="EMBL" id="CH471064">
    <property type="protein sequence ID" value="EAW67988.1"/>
    <property type="molecule type" value="Genomic_DNA"/>
</dbReference>
<dbReference type="EMBL" id="CH471064">
    <property type="protein sequence ID" value="EAW67989.1"/>
    <property type="molecule type" value="Genomic_DNA"/>
</dbReference>
<dbReference type="EMBL" id="CH471064">
    <property type="protein sequence ID" value="EAW67990.1"/>
    <property type="molecule type" value="Genomic_DNA"/>
</dbReference>
<dbReference type="EMBL" id="CH471064">
    <property type="protein sequence ID" value="EAW67991.1"/>
    <property type="molecule type" value="Genomic_DNA"/>
</dbReference>
<dbReference type="EMBL" id="BC001331">
    <property type="protein sequence ID" value="AAH01331.1"/>
    <property type="molecule type" value="mRNA"/>
</dbReference>
<dbReference type="EMBL" id="BC002378">
    <property type="protein sequence ID" value="AAH02378.1"/>
    <property type="molecule type" value="mRNA"/>
</dbReference>
<dbReference type="EMBL" id="BC006191">
    <property type="protein sequence ID" value="AAH06191.1"/>
    <property type="molecule type" value="mRNA"/>
</dbReference>
<dbReference type="CCDS" id="CCDS44582.1">
    <molecule id="O75143-1"/>
</dbReference>
<dbReference type="CCDS" id="CCDS55760.1">
    <molecule id="O75143-5"/>
</dbReference>
<dbReference type="CCDS" id="CCDS55761.1">
    <molecule id="O75143-4"/>
</dbReference>
<dbReference type="CCDS" id="CCDS7921.1">
    <molecule id="O75143-2"/>
</dbReference>
<dbReference type="RefSeq" id="NP_001136145.1">
    <molecule id="O75143-1"/>
    <property type="nucleotide sequence ID" value="NM_001142673.3"/>
</dbReference>
<dbReference type="RefSeq" id="NP_001192048.1">
    <molecule id="O75143-5"/>
    <property type="nucleotide sequence ID" value="NM_001205119.2"/>
</dbReference>
<dbReference type="RefSeq" id="NP_001192049.1">
    <molecule id="O75143-1"/>
    <property type="nucleotide sequence ID" value="NM_001205120.2"/>
</dbReference>
<dbReference type="RefSeq" id="NP_001192050.1">
    <molecule id="O75143-2"/>
    <property type="nucleotide sequence ID" value="NM_001205121.2"/>
</dbReference>
<dbReference type="RefSeq" id="NP_001192051.1">
    <molecule id="O75143-4"/>
    <property type="nucleotide sequence ID" value="NM_001205122.2"/>
</dbReference>
<dbReference type="RefSeq" id="NP_001333240.1">
    <molecule id="O75143-5"/>
    <property type="nucleotide sequence ID" value="NM_001346311.2"/>
</dbReference>
<dbReference type="RefSeq" id="NP_001333241.1">
    <molecule id="O75143-5"/>
    <property type="nucleotide sequence ID" value="NM_001346312.2"/>
</dbReference>
<dbReference type="RefSeq" id="NP_001333242.1">
    <molecule id="O75143-5"/>
    <property type="nucleotide sequence ID" value="NM_001346313.2"/>
</dbReference>
<dbReference type="RefSeq" id="NP_001333243.1">
    <molecule id="O75143-5"/>
    <property type="nucleotide sequence ID" value="NM_001346314.2"/>
</dbReference>
<dbReference type="RefSeq" id="NP_001333244.1">
    <molecule id="O75143-5"/>
    <property type="nucleotide sequence ID" value="NM_001346315.2"/>
</dbReference>
<dbReference type="RefSeq" id="NP_001333245.1">
    <molecule id="O75143-5"/>
    <property type="nucleotide sequence ID" value="NM_001346316.2"/>
</dbReference>
<dbReference type="RefSeq" id="NP_001333248.1">
    <molecule id="O75143-1"/>
    <property type="nucleotide sequence ID" value="NM_001346319.2"/>
</dbReference>
<dbReference type="RefSeq" id="NP_001333249.1">
    <molecule id="O75143-1"/>
    <property type="nucleotide sequence ID" value="NM_001346320.2"/>
</dbReference>
<dbReference type="RefSeq" id="NP_001333250.1">
    <molecule id="O75143-1"/>
    <property type="nucleotide sequence ID" value="NM_001346321.2"/>
</dbReference>
<dbReference type="RefSeq" id="NP_001333251.1">
    <molecule id="O75143-1"/>
    <property type="nucleotide sequence ID" value="NM_001346322.2"/>
</dbReference>
<dbReference type="RefSeq" id="NP_001333252.1">
    <molecule id="O75143-1"/>
    <property type="nucleotide sequence ID" value="NM_001346323.2"/>
</dbReference>
<dbReference type="RefSeq" id="NP_001333253.1">
    <molecule id="O75143-1"/>
    <property type="nucleotide sequence ID" value="NM_001346324.2"/>
</dbReference>
<dbReference type="RefSeq" id="NP_001333254.1">
    <molecule id="O75143-1"/>
    <property type="nucleotide sequence ID" value="NM_001346325.2"/>
</dbReference>
<dbReference type="RefSeq" id="NP_001333255.1">
    <molecule id="O75143-1"/>
    <property type="nucleotide sequence ID" value="NM_001346326.2"/>
</dbReference>
<dbReference type="RefSeq" id="NP_001333256.1">
    <molecule id="O75143-1"/>
    <property type="nucleotide sequence ID" value="NM_001346327.2"/>
</dbReference>
<dbReference type="RefSeq" id="NP_001333257.1">
    <molecule id="O75143-1"/>
    <property type="nucleotide sequence ID" value="NM_001346328.2"/>
</dbReference>
<dbReference type="RefSeq" id="NP_001333258.1">
    <molecule id="O75143-1"/>
    <property type="nucleotide sequence ID" value="NM_001346329.2"/>
</dbReference>
<dbReference type="RefSeq" id="NP_001333259.1">
    <molecule id="O75143-1"/>
    <property type="nucleotide sequence ID" value="NM_001346330.2"/>
</dbReference>
<dbReference type="RefSeq" id="NP_001333260.1">
    <molecule id="O75143-1"/>
    <property type="nucleotide sequence ID" value="NM_001346331.2"/>
</dbReference>
<dbReference type="RefSeq" id="NP_001333261.1">
    <molecule id="O75143-1"/>
    <property type="nucleotide sequence ID" value="NM_001346332.2"/>
</dbReference>
<dbReference type="RefSeq" id="NP_001333271.1">
    <molecule id="O75143-2"/>
    <property type="nucleotide sequence ID" value="NM_001346342.2"/>
</dbReference>
<dbReference type="RefSeq" id="NP_001333273.1">
    <molecule id="O75143-2"/>
    <property type="nucleotide sequence ID" value="NM_001346344.2"/>
</dbReference>
<dbReference type="RefSeq" id="NP_001333275.1">
    <molecule id="O75143-2"/>
    <property type="nucleotide sequence ID" value="NM_001346346.2"/>
</dbReference>
<dbReference type="RefSeq" id="NP_001333277.1">
    <molecule id="O75143-2"/>
    <property type="nucleotide sequence ID" value="NM_001346348.2"/>
</dbReference>
<dbReference type="RefSeq" id="NP_001333278.1">
    <molecule id="O75143-2"/>
    <property type="nucleotide sequence ID" value="NM_001346349.2"/>
</dbReference>
<dbReference type="RefSeq" id="NP_001333279.1">
    <molecule id="O75143-2"/>
    <property type="nucleotide sequence ID" value="NM_001346350.2"/>
</dbReference>
<dbReference type="RefSeq" id="NP_001333280.1">
    <molecule id="O75143-2"/>
    <property type="nucleotide sequence ID" value="NM_001346351.2"/>
</dbReference>
<dbReference type="RefSeq" id="NP_001333281.1">
    <molecule id="O75143-2"/>
    <property type="nucleotide sequence ID" value="NM_001346352.2"/>
</dbReference>
<dbReference type="RefSeq" id="NP_001333282.1">
    <molecule id="O75143-2"/>
    <property type="nucleotide sequence ID" value="NM_001346353.2"/>
</dbReference>
<dbReference type="RefSeq" id="NP_001333283.1">
    <molecule id="O75143-2"/>
    <property type="nucleotide sequence ID" value="NM_001346354.2"/>
</dbReference>
<dbReference type="RefSeq" id="NP_055556.2">
    <molecule id="O75143-2"/>
    <property type="nucleotide sequence ID" value="NM_014741.4"/>
</dbReference>
<dbReference type="RefSeq" id="XP_005253322.1">
    <property type="nucleotide sequence ID" value="XM_005253265.2"/>
</dbReference>
<dbReference type="RefSeq" id="XP_005253323.1">
    <property type="nucleotide sequence ID" value="XM_005253266.2"/>
</dbReference>
<dbReference type="RefSeq" id="XP_005253325.1">
    <property type="nucleotide sequence ID" value="XM_005253268.2"/>
</dbReference>
<dbReference type="RefSeq" id="XP_006718459.1">
    <property type="nucleotide sequence ID" value="XM_006718396.2"/>
</dbReference>
<dbReference type="RefSeq" id="XP_011518795.1">
    <property type="nucleotide sequence ID" value="XM_011520493.1"/>
</dbReference>
<dbReference type="RefSeq" id="XP_011518798.1">
    <property type="nucleotide sequence ID" value="XM_011520496.2"/>
</dbReference>
<dbReference type="RefSeq" id="XP_011518801.1">
    <property type="nucleotide sequence ID" value="XM_011520499.2"/>
</dbReference>
<dbReference type="RefSeq" id="XP_016874088.1">
    <property type="nucleotide sequence ID" value="XM_017018599.1"/>
</dbReference>
<dbReference type="RefSeq" id="XP_016874092.1">
    <property type="nucleotide sequence ID" value="XM_017018603.1"/>
</dbReference>
<dbReference type="RefSeq" id="XP_016874096.1">
    <property type="nucleotide sequence ID" value="XM_017018607.1"/>
</dbReference>
<dbReference type="PDB" id="3WAN">
    <property type="method" value="X-ray"/>
    <property type="resolution" value="1.77 A"/>
    <property type="chains" value="A/B=436-447"/>
</dbReference>
<dbReference type="PDB" id="3WAO">
    <property type="method" value="X-ray"/>
    <property type="resolution" value="2.60 A"/>
    <property type="chains" value="A/B/C/D=436-447"/>
</dbReference>
<dbReference type="PDB" id="3WAP">
    <property type="method" value="X-ray"/>
    <property type="resolution" value="3.10 A"/>
    <property type="chains" value="A=436-447"/>
</dbReference>
<dbReference type="PDB" id="5C50">
    <property type="method" value="X-ray"/>
    <property type="resolution" value="1.63 A"/>
    <property type="chains" value="B=12-200"/>
</dbReference>
<dbReference type="PDB" id="5XUY">
    <property type="method" value="X-ray"/>
    <property type="resolution" value="2.20 A"/>
    <property type="chains" value="A/C=1-190"/>
</dbReference>
<dbReference type="PDB" id="5XV1">
    <property type="method" value="X-ray"/>
    <property type="resolution" value="2.51 A"/>
    <property type="chains" value="A/C=1-190"/>
</dbReference>
<dbReference type="PDB" id="5XV3">
    <property type="method" value="X-ray"/>
    <property type="resolution" value="2.57 A"/>
    <property type="chains" value="A/C=1-190"/>
</dbReference>
<dbReference type="PDB" id="5XV4">
    <property type="method" value="X-ray"/>
    <property type="resolution" value="2.95 A"/>
    <property type="chains" value="A/C/E/G/I/K/M/O=1-190"/>
</dbReference>
<dbReference type="PDB" id="5XV6">
    <property type="method" value="X-ray"/>
    <property type="resolution" value="2.46 A"/>
    <property type="chains" value="A=1-190"/>
</dbReference>
<dbReference type="PDB" id="6HYN">
    <property type="method" value="X-ray"/>
    <property type="resolution" value="1.14 A"/>
    <property type="chains" value="A=441-454"/>
</dbReference>
<dbReference type="PDB" id="8DO8">
    <property type="method" value="X-ray"/>
    <property type="resolution" value="2.41 A"/>
    <property type="chains" value="B/D=1-197"/>
</dbReference>
<dbReference type="PDB" id="8SOI">
    <property type="method" value="EM"/>
    <property type="resolution" value="4.20 A"/>
    <property type="chains" value="D=462-517"/>
</dbReference>
<dbReference type="PDB" id="8SQZ">
    <property type="method" value="EM"/>
    <property type="resolution" value="5.85 A"/>
    <property type="chains" value="E/F=363-517"/>
</dbReference>
<dbReference type="PDB" id="8SRM">
    <property type="method" value="EM"/>
    <property type="resolution" value="4.46 A"/>
    <property type="chains" value="E/F=450-517"/>
</dbReference>
<dbReference type="PDB" id="9C82">
    <property type="method" value="EM"/>
    <property type="resolution" value="6.20 A"/>
    <property type="chains" value="D=462-517"/>
</dbReference>
<dbReference type="PDBsum" id="3WAN"/>
<dbReference type="PDBsum" id="3WAO"/>
<dbReference type="PDBsum" id="3WAP"/>
<dbReference type="PDBsum" id="5C50"/>
<dbReference type="PDBsum" id="5XUY"/>
<dbReference type="PDBsum" id="5XV1"/>
<dbReference type="PDBsum" id="5XV3"/>
<dbReference type="PDBsum" id="5XV4"/>
<dbReference type="PDBsum" id="5XV6"/>
<dbReference type="PDBsum" id="6HYN"/>
<dbReference type="PDBsum" id="8DO8"/>
<dbReference type="PDBsum" id="8SOI"/>
<dbReference type="PDBsum" id="8SQZ"/>
<dbReference type="PDBsum" id="8SRM"/>
<dbReference type="PDBsum" id="9C82"/>
<dbReference type="EMDB" id="EMD-40658"/>
<dbReference type="EMDB" id="EMD-40715"/>
<dbReference type="EMDB" id="EMD-40735"/>
<dbReference type="EMDB" id="EMD-40738"/>
<dbReference type="SMR" id="O75143"/>
<dbReference type="BioGRID" id="115120">
    <property type="interactions" value="208"/>
</dbReference>
<dbReference type="ComplexPortal" id="CPX-373">
    <property type="entry name" value="ULK1-ATG13-RB1CC1-ATG101 autophagy initiation complex"/>
</dbReference>
<dbReference type="CORUM" id="O75143"/>
<dbReference type="DIP" id="DIP-60540N"/>
<dbReference type="ELM" id="O75143"/>
<dbReference type="FunCoup" id="O75143">
    <property type="interactions" value="2104"/>
</dbReference>
<dbReference type="IntAct" id="O75143">
    <property type="interactions" value="208"/>
</dbReference>
<dbReference type="MINT" id="O75143"/>
<dbReference type="STRING" id="9606.ENSP00000432412"/>
<dbReference type="TCDB" id="9.A.15.2.1">
    <property type="family name" value="the autophagy-related phagophore-formation transporter (apt) family"/>
</dbReference>
<dbReference type="GlyGen" id="O75143">
    <property type="glycosylation" value="2 sites, 1 O-linked glycan (1 site)"/>
</dbReference>
<dbReference type="iPTMnet" id="O75143"/>
<dbReference type="PhosphoSitePlus" id="O75143"/>
<dbReference type="BioMuta" id="ATG13"/>
<dbReference type="jPOST" id="O75143"/>
<dbReference type="MassIVE" id="O75143"/>
<dbReference type="PaxDb" id="9606-ENSP00000432412"/>
<dbReference type="PeptideAtlas" id="O75143"/>
<dbReference type="ProteomicsDB" id="23169"/>
<dbReference type="ProteomicsDB" id="4042"/>
<dbReference type="ProteomicsDB" id="49803">
    <molecule id="O75143-1"/>
</dbReference>
<dbReference type="ProteomicsDB" id="49804">
    <molecule id="O75143-2"/>
</dbReference>
<dbReference type="ProteomicsDB" id="49805">
    <molecule id="O75143-3"/>
</dbReference>
<dbReference type="Pumba" id="O75143"/>
<dbReference type="Antibodypedia" id="26361">
    <property type="antibodies" value="602 antibodies from 38 providers"/>
</dbReference>
<dbReference type="DNASU" id="9776"/>
<dbReference type="Ensembl" id="ENST00000359513.8">
    <molecule id="O75143-1"/>
    <property type="protein sequence ID" value="ENSP00000352500.4"/>
    <property type="gene ID" value="ENSG00000175224.17"/>
</dbReference>
<dbReference type="Ensembl" id="ENST00000524625.5">
    <molecule id="O75143-2"/>
    <property type="protein sequence ID" value="ENSP00000433543.1"/>
    <property type="gene ID" value="ENSG00000175224.17"/>
</dbReference>
<dbReference type="Ensembl" id="ENST00000526508.5">
    <molecule id="O75143-1"/>
    <property type="protein sequence ID" value="ENSP00000431974.1"/>
    <property type="gene ID" value="ENSG00000175224.17"/>
</dbReference>
<dbReference type="Ensembl" id="ENST00000528494.5">
    <molecule id="O75143-5"/>
    <property type="protein sequence ID" value="ENSP00000432412.1"/>
    <property type="gene ID" value="ENSG00000175224.17"/>
</dbReference>
<dbReference type="Ensembl" id="ENST00000529655.5">
    <molecule id="O75143-2"/>
    <property type="protein sequence ID" value="ENSP00000433756.1"/>
    <property type="gene ID" value="ENSG00000175224.17"/>
</dbReference>
<dbReference type="Ensembl" id="ENST00000530500.5">
    <molecule id="O75143-4"/>
    <property type="protein sequence ID" value="ENSP00000434390.1"/>
    <property type="gene ID" value="ENSG00000175224.17"/>
</dbReference>
<dbReference type="Ensembl" id="ENST00000683050.1">
    <molecule id="O75143-5"/>
    <property type="protein sequence ID" value="ENSP00000507809.1"/>
    <property type="gene ID" value="ENSG00000175224.17"/>
</dbReference>
<dbReference type="GeneID" id="9776"/>
<dbReference type="KEGG" id="hsa:9776"/>
<dbReference type="MANE-Select" id="ENST00000683050.1">
    <molecule id="O75143-5"/>
    <property type="protein sequence ID" value="ENSP00000507809.1"/>
    <property type="RefSeq nucleotide sequence ID" value="NM_001346311.2"/>
    <property type="RefSeq protein sequence ID" value="NP_001333240.1"/>
</dbReference>
<dbReference type="UCSC" id="uc001ncz.4">
    <molecule id="O75143-1"/>
    <property type="organism name" value="human"/>
</dbReference>
<dbReference type="AGR" id="HGNC:29091"/>
<dbReference type="CTD" id="9776"/>
<dbReference type="DisGeNET" id="9776"/>
<dbReference type="GeneCards" id="ATG13"/>
<dbReference type="HGNC" id="HGNC:29091">
    <property type="gene designation" value="ATG13"/>
</dbReference>
<dbReference type="HPA" id="ENSG00000175224">
    <property type="expression patterns" value="Low tissue specificity"/>
</dbReference>
<dbReference type="MalaCards" id="ATG13"/>
<dbReference type="MIM" id="615088">
    <property type="type" value="gene"/>
</dbReference>
<dbReference type="neXtProt" id="NX_O75143"/>
<dbReference type="OpenTargets" id="ENSG00000175224"/>
<dbReference type="PharmGKB" id="PA165543187"/>
<dbReference type="VEuPathDB" id="HostDB:ENSG00000175224"/>
<dbReference type="eggNOG" id="KOG3874">
    <property type="taxonomic scope" value="Eukaryota"/>
</dbReference>
<dbReference type="GeneTree" id="ENSGT00390000007055"/>
<dbReference type="HOGENOM" id="CLU_036365_0_0_1"/>
<dbReference type="InParanoid" id="O75143"/>
<dbReference type="OMA" id="ETWYISL"/>
<dbReference type="OrthoDB" id="70161at2759"/>
<dbReference type="PAN-GO" id="O75143">
    <property type="GO annotations" value="7 GO annotations based on evolutionary models"/>
</dbReference>
<dbReference type="PhylomeDB" id="O75143"/>
<dbReference type="TreeFam" id="TF321599"/>
<dbReference type="PathwayCommons" id="O75143"/>
<dbReference type="Reactome" id="R-HSA-1632852">
    <property type="pathway name" value="Macroautophagy"/>
</dbReference>
<dbReference type="SignaLink" id="O75143"/>
<dbReference type="SIGNOR" id="O75143"/>
<dbReference type="BioGRID-ORCS" id="9776">
    <property type="hits" value="33 hits in 1165 CRISPR screens"/>
</dbReference>
<dbReference type="ChiTaRS" id="ATG13">
    <property type="organism name" value="human"/>
</dbReference>
<dbReference type="GeneWiki" id="Autophagy-related_protein_13"/>
<dbReference type="GenomeRNAi" id="9776"/>
<dbReference type="Pharos" id="O75143">
    <property type="development level" value="Tbio"/>
</dbReference>
<dbReference type="PRO" id="PR:O75143"/>
<dbReference type="Proteomes" id="UP000005640">
    <property type="component" value="Chromosome 11"/>
</dbReference>
<dbReference type="RNAct" id="O75143">
    <property type="molecule type" value="protein"/>
</dbReference>
<dbReference type="Bgee" id="ENSG00000175224">
    <property type="expression patterns" value="Expressed in left testis and 204 other cell types or tissues"/>
</dbReference>
<dbReference type="ExpressionAtlas" id="O75143">
    <property type="expression patterns" value="baseline and differential"/>
</dbReference>
<dbReference type="GO" id="GO:1990316">
    <property type="term" value="C:Atg1/ULK1 kinase complex"/>
    <property type="evidence" value="ECO:0000353"/>
    <property type="project" value="UniProtKB"/>
</dbReference>
<dbReference type="GO" id="GO:0005776">
    <property type="term" value="C:autophagosome"/>
    <property type="evidence" value="ECO:0000318"/>
    <property type="project" value="GO_Central"/>
</dbReference>
<dbReference type="GO" id="GO:0005737">
    <property type="term" value="C:cytoplasm"/>
    <property type="evidence" value="ECO:0000305"/>
    <property type="project" value="UniProt"/>
</dbReference>
<dbReference type="GO" id="GO:0005829">
    <property type="term" value="C:cytosol"/>
    <property type="evidence" value="ECO:0000318"/>
    <property type="project" value="GO_Central"/>
</dbReference>
<dbReference type="GO" id="GO:0005789">
    <property type="term" value="C:endoplasmic reticulum membrane"/>
    <property type="evidence" value="ECO:0000304"/>
    <property type="project" value="Reactome"/>
</dbReference>
<dbReference type="GO" id="GO:0005739">
    <property type="term" value="C:mitochondrion"/>
    <property type="evidence" value="ECO:0000314"/>
    <property type="project" value="ParkinsonsUK-UCL"/>
</dbReference>
<dbReference type="GO" id="GO:0000407">
    <property type="term" value="C:phagophore assembly site"/>
    <property type="evidence" value="ECO:0000314"/>
    <property type="project" value="ComplexPortal"/>
</dbReference>
<dbReference type="GO" id="GO:0034045">
    <property type="term" value="C:phagophore assembly site membrane"/>
    <property type="evidence" value="ECO:0000314"/>
    <property type="project" value="UniProt"/>
</dbReference>
<dbReference type="GO" id="GO:0019901">
    <property type="term" value="F:protein kinase binding"/>
    <property type="evidence" value="ECO:0000314"/>
    <property type="project" value="UniProt"/>
</dbReference>
<dbReference type="GO" id="GO:0019887">
    <property type="term" value="F:protein kinase regulator activity"/>
    <property type="evidence" value="ECO:0000318"/>
    <property type="project" value="GO_Central"/>
</dbReference>
<dbReference type="GO" id="GO:0043539">
    <property type="term" value="F:protein serine/threonine kinase activator activity"/>
    <property type="evidence" value="ECO:0000314"/>
    <property type="project" value="UniProt"/>
</dbReference>
<dbReference type="GO" id="GO:0000045">
    <property type="term" value="P:autophagosome assembly"/>
    <property type="evidence" value="ECO:0000314"/>
    <property type="project" value="ComplexPortal"/>
</dbReference>
<dbReference type="GO" id="GO:0000423">
    <property type="term" value="P:mitophagy"/>
    <property type="evidence" value="ECO:0000318"/>
    <property type="project" value="GO_Central"/>
</dbReference>
<dbReference type="GO" id="GO:0008285">
    <property type="term" value="P:negative regulation of cell population proliferation"/>
    <property type="evidence" value="ECO:0000314"/>
    <property type="project" value="ComplexPortal"/>
</dbReference>
<dbReference type="GO" id="GO:0034727">
    <property type="term" value="P:piecemeal microautophagy of the nucleus"/>
    <property type="evidence" value="ECO:0000318"/>
    <property type="project" value="GO_Central"/>
</dbReference>
<dbReference type="GO" id="GO:0010508">
    <property type="term" value="P:positive regulation of autophagy"/>
    <property type="evidence" value="ECO:0000314"/>
    <property type="project" value="UniProt"/>
</dbReference>
<dbReference type="GO" id="GO:1903955">
    <property type="term" value="P:positive regulation of protein targeting to mitochondrion"/>
    <property type="evidence" value="ECO:0007001"/>
    <property type="project" value="ParkinsonsUK-UCL"/>
</dbReference>
<dbReference type="GO" id="GO:0034497">
    <property type="term" value="P:protein localization to phagophore assembly site"/>
    <property type="evidence" value="ECO:0000318"/>
    <property type="project" value="GO_Central"/>
</dbReference>
<dbReference type="GO" id="GO:0098780">
    <property type="term" value="P:response to mitochondrial depolarisation"/>
    <property type="evidence" value="ECO:0007669"/>
    <property type="project" value="Ensembl"/>
</dbReference>
<dbReference type="FunFam" id="3.30.900.10:FF:000001">
    <property type="entry name" value="Autophagy-related protein 13"/>
    <property type="match status" value="1"/>
</dbReference>
<dbReference type="Gene3D" id="3.30.900.10">
    <property type="entry name" value="HORMA domain"/>
    <property type="match status" value="1"/>
</dbReference>
<dbReference type="InterPro" id="IPR040182">
    <property type="entry name" value="ATG13"/>
</dbReference>
<dbReference type="InterPro" id="IPR036570">
    <property type="entry name" value="HORMA_dom_sf"/>
</dbReference>
<dbReference type="PANTHER" id="PTHR13430">
    <property type="match status" value="1"/>
</dbReference>
<dbReference type="PANTHER" id="PTHR13430:SF4">
    <property type="entry name" value="AUTOPHAGY-RELATED PROTEIN 13"/>
    <property type="match status" value="1"/>
</dbReference>
<comment type="function">
    <text evidence="2 3 4 5 8 9">Autophagy factor required for autophagosome formation and mitophagy. Target of the TOR kinase signaling pathway that regulates autophagy through the control of the phosphorylation status of ATG13 and ULK1, and the regulation of the ATG13-ULK1-RB1CC1 complex. Through its regulation of ULK1 activity, plays a role in the regulation of the kinase activity of mTORC1 and cell proliferation.</text>
</comment>
<comment type="subunit">
    <text evidence="2 3 4 5 6 7 9 10 11 13 14 15">Part of a complex consisting of ATG13, ULK1 and RB1CC1 (PubMed:19211835, PubMed:19225151, PubMed:19597335, PubMed:24290141). Interacts with ATG101 (PubMed:19287211, PubMed:19597335, PubMed:26299944). Interacts with ULK1 (via C-terminus); this interaction is increased in the absence of TMEM39A (PubMed:18936157, PubMed:19287211, PubMed:21855797, PubMed:31806350). Interacts with ULK2 (via C-terminus) (PubMed:18936157, PubMed:19225151). Interacts (via the LIR motif) with GABARAP, GABARAPL, GABARAPL2 (PubMed:23043107). Interacts (via the LIR motif) with MAP1LC3A, MAP1LC3B and MAP1LC3C (PubMed:24290141). Interacts with TAB2 and TAB3 (PubMed:21976705). Interacts with C9orf72 (PubMed:27334615). Interacts with RB1CC1; this interaction is increased in the absence of TMEM39A (PubMed:31806350).</text>
</comment>
<comment type="interaction">
    <interactant intactId="EBI-2798775">
        <id>O75143</id>
    </interactant>
    <interactant intactId="EBI-2946739">
        <id>Q9BSB4</id>
        <label>ATG101</label>
    </interactant>
    <organismsDiffer>false</organismsDiffer>
    <experiments>21</experiments>
</comment>
<comment type="interaction">
    <interactant intactId="EBI-2798775">
        <id>O75143</id>
    </interactant>
    <interactant intactId="EBI-16693635">
        <id>Q96LT7-1</id>
        <label>C9orf72</label>
    </interactant>
    <organismsDiffer>false</organismsDiffer>
    <experiments>5</experiments>
</comment>
<comment type="interaction">
    <interactant intactId="EBI-2798775">
        <id>O75143</id>
    </interactant>
    <interactant intactId="EBI-16693673">
        <id>Q96LT7-2</id>
        <label>C9orf72</label>
    </interactant>
    <organismsDiffer>false</organismsDiffer>
    <experiments>4</experiments>
</comment>
<comment type="interaction">
    <interactant intactId="EBI-2798775">
        <id>O75143</id>
    </interactant>
    <interactant intactId="EBI-712001">
        <id>O95166</id>
        <label>GABARAP</label>
    </interactant>
    <organismsDiffer>false</organismsDiffer>
    <experiments>3</experiments>
</comment>
<comment type="interaction">
    <interactant intactId="EBI-2798775">
        <id>O75143</id>
    </interactant>
    <interactant intactId="EBI-746969">
        <id>Q9H0R8</id>
        <label>GABARAPL1</label>
    </interactant>
    <organismsDiffer>false</organismsDiffer>
    <experiments>2</experiments>
</comment>
<comment type="interaction">
    <interactant intactId="EBI-2798775">
        <id>O75143</id>
    </interactant>
    <interactant intactId="EBI-720116">
        <id>P60520</id>
        <label>GABARAPL2</label>
    </interactant>
    <organismsDiffer>false</organismsDiffer>
    <experiments>4</experiments>
</comment>
<comment type="interaction">
    <interactant intactId="EBI-2798775">
        <id>O75143</id>
    </interactant>
    <interactant intactId="EBI-16082793">
        <id>Q9H492-1</id>
        <label>MAP1LC3A</label>
    </interactant>
    <organismsDiffer>false</organismsDiffer>
    <experiments>7</experiments>
</comment>
<comment type="interaction">
    <interactant intactId="EBI-2798775">
        <id>O75143</id>
    </interactant>
    <interactant intactId="EBI-373144">
        <id>Q9GZQ8</id>
        <label>MAP1LC3B</label>
    </interactant>
    <organismsDiffer>false</organismsDiffer>
    <experiments>5</experiments>
</comment>
<comment type="interaction">
    <interactant intactId="EBI-2798775">
        <id>O75143</id>
    </interactant>
    <interactant intactId="EBI-2603996">
        <id>Q9BXW4</id>
        <label>MAP1LC3C</label>
    </interactant>
    <organismsDiffer>false</organismsDiffer>
    <experiments>8</experiments>
</comment>
<comment type="interaction">
    <interactant intactId="EBI-2798775">
        <id>O75143</id>
    </interactant>
    <interactant intactId="EBI-716327">
        <id>O75665</id>
        <label>OFD1</label>
    </interactant>
    <organismsDiffer>false</organismsDiffer>
    <experiments>4</experiments>
</comment>
<comment type="interaction">
    <interactant intactId="EBI-2798775">
        <id>O75143</id>
    </interactant>
    <interactant intactId="EBI-1047793">
        <id>Q8TDY2</id>
        <label>RB1CC1</label>
    </interactant>
    <organismsDiffer>false</organismsDiffer>
    <experiments>11</experiments>
</comment>
<comment type="interaction">
    <interactant intactId="EBI-2798775">
        <id>O75143</id>
    </interactant>
    <interactant intactId="EBI-908831">
        <id>O75385</id>
        <label>ULK1</label>
    </interactant>
    <organismsDiffer>false</organismsDiffer>
    <experiments>15</experiments>
</comment>
<comment type="interaction">
    <interactant intactId="EBI-20151086">
        <id>O75143-2</id>
    </interactant>
    <interactant intactId="EBI-2946739">
        <id>Q9BSB4</id>
        <label>ATG101</label>
    </interactant>
    <organismsDiffer>false</organismsDiffer>
    <experiments>3</experiments>
</comment>
<comment type="interaction">
    <interactant intactId="EBI-20151086">
        <id>O75143-2</id>
    </interactant>
    <interactant intactId="EBI-78219">
        <id>P45973</id>
        <label>CBX5</label>
    </interactant>
    <organismsDiffer>false</organismsDiffer>
    <experiments>3</experiments>
</comment>
<comment type="interaction">
    <interactant intactId="EBI-20151086">
        <id>O75143-2</id>
    </interactant>
    <interactant intactId="EBI-296151">
        <id>P37173</id>
        <label>TGFBR2</label>
    </interactant>
    <organismsDiffer>false</organismsDiffer>
    <experiments>3</experiments>
</comment>
<comment type="subcellular location">
    <subcellularLocation>
        <location evidence="3">Cytoplasm</location>
        <location evidence="3">Cytosol</location>
    </subcellularLocation>
    <subcellularLocation>
        <location evidence="3">Preautophagosomal structure</location>
    </subcellularLocation>
    <text evidence="3">Under starvation conditions, is localized to puncate structures primarily representing the isolation membrane; the isolation membrane sequesters a portion of the cytoplasm resulting in autophagosome formation.</text>
</comment>
<comment type="alternative products">
    <event type="alternative splicing"/>
    <isoform>
        <id>O75143-1</id>
        <name>1</name>
        <sequence type="displayed"/>
    </isoform>
    <isoform>
        <id>O75143-2</id>
        <name>2</name>
        <sequence type="described" ref="VSP_002431"/>
    </isoform>
    <isoform>
        <id>O75143-3</id>
        <name>3</name>
        <sequence type="described" ref="VSP_002431 VSP_002432 VSP_002433"/>
    </isoform>
    <isoform>
        <id>O75143-4</id>
        <name>4</name>
        <sequence type="described" ref="VSP_044503 VSP_044504"/>
    </isoform>
    <isoform>
        <id>O75143-5</id>
        <name>5</name>
        <sequence type="described" ref="VSP_044640"/>
    </isoform>
    <text>Experimental confirmation may be lacking for some isoforms.</text>
</comment>
<comment type="domain">
    <text evidence="11">The LIR motif (LC3-interacting region) is required for the interaction with the ATG8 family proteins GABARAP, GABARAPL, GABARAPL2, and MAP1LC3A.</text>
</comment>
<comment type="PTM">
    <text evidence="2 3 4 5 7 9">Phosphorylated by ULK1, ULK2 and mTOR. Phosphorylation status depends on nutrient-rich conditions; dephosphorylated during starvation or following treatment with rapamycin. ULK1-mediated phosphorylation of ATG13 at Ser-355 is required for efficient clearance of depolarized mitochondria.</text>
</comment>
<comment type="similarity">
    <text evidence="19">Belongs to the ATG13 family. Metazoan subfamily.</text>
</comment>
<comment type="sequence caution" evidence="19">
    <conflict type="erroneous initiation">
        <sequence resource="EMBL-CDS" id="BAA31627"/>
    </conflict>
    <text>Extended N-terminus.</text>
</comment>
<comment type="sequence caution" evidence="19">
    <conflict type="erroneous initiation">
        <sequence resource="EMBL-CDS" id="BAD97323"/>
    </conflict>
    <text>Extended N-terminus.</text>
</comment>
<evidence type="ECO:0000256" key="1">
    <source>
        <dbReference type="SAM" id="MobiDB-lite"/>
    </source>
</evidence>
<evidence type="ECO:0000269" key="2">
    <source>
    </source>
</evidence>
<evidence type="ECO:0000269" key="3">
    <source>
    </source>
</evidence>
<evidence type="ECO:0000269" key="4">
    <source>
    </source>
</evidence>
<evidence type="ECO:0000269" key="5">
    <source>
    </source>
</evidence>
<evidence type="ECO:0000269" key="6">
    <source>
    </source>
</evidence>
<evidence type="ECO:0000269" key="7">
    <source>
    </source>
</evidence>
<evidence type="ECO:0000269" key="8">
    <source>
    </source>
</evidence>
<evidence type="ECO:0000269" key="9">
    <source>
    </source>
</evidence>
<evidence type="ECO:0000269" key="10">
    <source>
    </source>
</evidence>
<evidence type="ECO:0000269" key="11">
    <source>
    </source>
</evidence>
<evidence type="ECO:0000269" key="12">
    <source>
    </source>
</evidence>
<evidence type="ECO:0000269" key="13">
    <source>
    </source>
</evidence>
<evidence type="ECO:0000269" key="14">
    <source>
    </source>
</evidence>
<evidence type="ECO:0000269" key="15">
    <source>
    </source>
</evidence>
<evidence type="ECO:0000303" key="16">
    <source>
    </source>
</evidence>
<evidence type="ECO:0000303" key="17">
    <source>
    </source>
</evidence>
<evidence type="ECO:0000303" key="18">
    <source ref="3"/>
</evidence>
<evidence type="ECO:0000305" key="19"/>
<evidence type="ECO:0000305" key="20">
    <source>
    </source>
</evidence>
<evidence type="ECO:0007744" key="21">
    <source>
    </source>
</evidence>
<evidence type="ECO:0007744" key="22">
    <source>
    </source>
</evidence>
<evidence type="ECO:0007744" key="23">
    <source>
    </source>
</evidence>
<evidence type="ECO:0007744" key="24">
    <source>
    </source>
</evidence>
<evidence type="ECO:0007829" key="25">
    <source>
        <dbReference type="PDB" id="5C50"/>
    </source>
</evidence>
<evidence type="ECO:0007829" key="26">
    <source>
        <dbReference type="PDB" id="5XUY"/>
    </source>
</evidence>
<evidence type="ECO:0007829" key="27">
    <source>
        <dbReference type="PDB" id="5XV3"/>
    </source>
</evidence>
<evidence type="ECO:0007829" key="28">
    <source>
        <dbReference type="PDB" id="5XV6"/>
    </source>
</evidence>
<evidence type="ECO:0007829" key="29">
    <source>
        <dbReference type="PDB" id="6HYN"/>
    </source>
</evidence>